<dbReference type="EC" id="6.3.4.5" evidence="1"/>
<dbReference type="EMBL" id="AE000666">
    <property type="protein sequence ID" value="AAB85743.1"/>
    <property type="molecule type" value="Genomic_DNA"/>
</dbReference>
<dbReference type="PIR" id="F69034">
    <property type="entry name" value="F69034"/>
</dbReference>
<dbReference type="SMR" id="O27322"/>
<dbReference type="FunCoup" id="O27322">
    <property type="interactions" value="194"/>
</dbReference>
<dbReference type="STRING" id="187420.MTH_1254"/>
<dbReference type="PaxDb" id="187420-MTH_1254"/>
<dbReference type="EnsemblBacteria" id="AAB85743">
    <property type="protein sequence ID" value="AAB85743"/>
    <property type="gene ID" value="MTH_1254"/>
</dbReference>
<dbReference type="KEGG" id="mth:MTH_1254"/>
<dbReference type="PATRIC" id="fig|187420.15.peg.1233"/>
<dbReference type="HOGENOM" id="CLU_032784_4_0_2"/>
<dbReference type="InParanoid" id="O27322"/>
<dbReference type="UniPathway" id="UPA00068">
    <property type="reaction ID" value="UER00113"/>
</dbReference>
<dbReference type="Proteomes" id="UP000005223">
    <property type="component" value="Chromosome"/>
</dbReference>
<dbReference type="GO" id="GO:0005737">
    <property type="term" value="C:cytoplasm"/>
    <property type="evidence" value="ECO:0007669"/>
    <property type="project" value="UniProtKB-SubCell"/>
</dbReference>
<dbReference type="GO" id="GO:0004055">
    <property type="term" value="F:argininosuccinate synthase activity"/>
    <property type="evidence" value="ECO:0007669"/>
    <property type="project" value="UniProtKB-UniRule"/>
</dbReference>
<dbReference type="GO" id="GO:0005524">
    <property type="term" value="F:ATP binding"/>
    <property type="evidence" value="ECO:0007669"/>
    <property type="project" value="UniProtKB-UniRule"/>
</dbReference>
<dbReference type="GO" id="GO:0000053">
    <property type="term" value="P:argininosuccinate metabolic process"/>
    <property type="evidence" value="ECO:0007669"/>
    <property type="project" value="TreeGrafter"/>
</dbReference>
<dbReference type="GO" id="GO:0006526">
    <property type="term" value="P:L-arginine biosynthetic process"/>
    <property type="evidence" value="ECO:0007669"/>
    <property type="project" value="UniProtKB-UniRule"/>
</dbReference>
<dbReference type="GO" id="GO:0000050">
    <property type="term" value="P:urea cycle"/>
    <property type="evidence" value="ECO:0007669"/>
    <property type="project" value="TreeGrafter"/>
</dbReference>
<dbReference type="CDD" id="cd01999">
    <property type="entry name" value="ASS"/>
    <property type="match status" value="1"/>
</dbReference>
<dbReference type="FunFam" id="3.40.50.620:FF:000019">
    <property type="entry name" value="Argininosuccinate synthase"/>
    <property type="match status" value="1"/>
</dbReference>
<dbReference type="FunFam" id="3.90.1260.10:FF:000007">
    <property type="entry name" value="Argininosuccinate synthase"/>
    <property type="match status" value="1"/>
</dbReference>
<dbReference type="Gene3D" id="3.90.1260.10">
    <property type="entry name" value="Argininosuccinate synthetase, chain A, domain 2"/>
    <property type="match status" value="1"/>
</dbReference>
<dbReference type="Gene3D" id="3.40.50.620">
    <property type="entry name" value="HUPs"/>
    <property type="match status" value="1"/>
</dbReference>
<dbReference type="HAMAP" id="MF_00005">
    <property type="entry name" value="Arg_succ_synth_type1"/>
    <property type="match status" value="1"/>
</dbReference>
<dbReference type="InterPro" id="IPR048268">
    <property type="entry name" value="Arginosuc_syn_C"/>
</dbReference>
<dbReference type="InterPro" id="IPR048267">
    <property type="entry name" value="Arginosuc_syn_N"/>
</dbReference>
<dbReference type="InterPro" id="IPR001518">
    <property type="entry name" value="Arginosuc_synth"/>
</dbReference>
<dbReference type="InterPro" id="IPR018223">
    <property type="entry name" value="Arginosuc_synth_CS"/>
</dbReference>
<dbReference type="InterPro" id="IPR023434">
    <property type="entry name" value="Arginosuc_synth_type_1_subfam"/>
</dbReference>
<dbReference type="InterPro" id="IPR024074">
    <property type="entry name" value="AS_cat/multimer_dom_body"/>
</dbReference>
<dbReference type="InterPro" id="IPR014729">
    <property type="entry name" value="Rossmann-like_a/b/a_fold"/>
</dbReference>
<dbReference type="NCBIfam" id="TIGR00032">
    <property type="entry name" value="argG"/>
    <property type="match status" value="1"/>
</dbReference>
<dbReference type="NCBIfam" id="NF001770">
    <property type="entry name" value="PRK00509.1"/>
    <property type="match status" value="1"/>
</dbReference>
<dbReference type="NCBIfam" id="NF010392">
    <property type="entry name" value="PRK13820.1"/>
    <property type="match status" value="1"/>
</dbReference>
<dbReference type="PANTHER" id="PTHR11587">
    <property type="entry name" value="ARGININOSUCCINATE SYNTHASE"/>
    <property type="match status" value="1"/>
</dbReference>
<dbReference type="PANTHER" id="PTHR11587:SF2">
    <property type="entry name" value="ARGININOSUCCINATE SYNTHASE"/>
    <property type="match status" value="1"/>
</dbReference>
<dbReference type="Pfam" id="PF20979">
    <property type="entry name" value="Arginosuc_syn_C"/>
    <property type="match status" value="1"/>
</dbReference>
<dbReference type="Pfam" id="PF00764">
    <property type="entry name" value="Arginosuc_synth"/>
    <property type="match status" value="1"/>
</dbReference>
<dbReference type="SUPFAM" id="SSF52402">
    <property type="entry name" value="Adenine nucleotide alpha hydrolases-like"/>
    <property type="match status" value="1"/>
</dbReference>
<dbReference type="SUPFAM" id="SSF69864">
    <property type="entry name" value="Argininosuccinate synthetase, C-terminal domain"/>
    <property type="match status" value="1"/>
</dbReference>
<dbReference type="PROSITE" id="PS00564">
    <property type="entry name" value="ARGININOSUCCIN_SYN_1"/>
    <property type="match status" value="1"/>
</dbReference>
<dbReference type="PROSITE" id="PS00565">
    <property type="entry name" value="ARGININOSUCCIN_SYN_2"/>
    <property type="match status" value="1"/>
</dbReference>
<protein>
    <recommendedName>
        <fullName evidence="1">Argininosuccinate synthase</fullName>
        <ecNumber evidence="1">6.3.4.5</ecNumber>
    </recommendedName>
    <alternativeName>
        <fullName evidence="1">Citrulline--aspartate ligase</fullName>
    </alternativeName>
</protein>
<organism>
    <name type="scientific">Methanothermobacter thermautotrophicus (strain ATCC 29096 / DSM 1053 / JCM 10044 / NBRC 100330 / Delta H)</name>
    <name type="common">Methanobacterium thermoautotrophicum</name>
    <dbReference type="NCBI Taxonomy" id="187420"/>
    <lineage>
        <taxon>Archaea</taxon>
        <taxon>Methanobacteriati</taxon>
        <taxon>Methanobacteriota</taxon>
        <taxon>Methanomada group</taxon>
        <taxon>Methanobacteria</taxon>
        <taxon>Methanobacteriales</taxon>
        <taxon>Methanobacteriaceae</taxon>
        <taxon>Methanothermobacter</taxon>
    </lineage>
</organism>
<feature type="chain" id="PRO_0000148680" description="Argininosuccinate synthase">
    <location>
        <begin position="1"/>
        <end position="399"/>
    </location>
</feature>
<feature type="binding site" evidence="1">
    <location>
        <begin position="12"/>
        <end position="20"/>
    </location>
    <ligand>
        <name>ATP</name>
        <dbReference type="ChEBI" id="CHEBI:30616"/>
    </ligand>
</feature>
<feature type="binding site" evidence="1">
    <location>
        <position position="90"/>
    </location>
    <ligand>
        <name>L-citrulline</name>
        <dbReference type="ChEBI" id="CHEBI:57743"/>
    </ligand>
</feature>
<feature type="binding site" evidence="1">
    <location>
        <position position="120"/>
    </location>
    <ligand>
        <name>ATP</name>
        <dbReference type="ChEBI" id="CHEBI:30616"/>
    </ligand>
</feature>
<feature type="binding site" evidence="1">
    <location>
        <position position="122"/>
    </location>
    <ligand>
        <name>L-aspartate</name>
        <dbReference type="ChEBI" id="CHEBI:29991"/>
    </ligand>
</feature>
<feature type="binding site" evidence="1">
    <location>
        <position position="126"/>
    </location>
    <ligand>
        <name>L-aspartate</name>
        <dbReference type="ChEBI" id="CHEBI:29991"/>
    </ligand>
</feature>
<feature type="binding site" evidence="1">
    <location>
        <position position="126"/>
    </location>
    <ligand>
        <name>L-citrulline</name>
        <dbReference type="ChEBI" id="CHEBI:57743"/>
    </ligand>
</feature>
<feature type="binding site" evidence="1">
    <location>
        <position position="127"/>
    </location>
    <ligand>
        <name>L-aspartate</name>
        <dbReference type="ChEBI" id="CHEBI:29991"/>
    </ligand>
</feature>
<feature type="binding site" evidence="1">
    <location>
        <position position="130"/>
    </location>
    <ligand>
        <name>L-citrulline</name>
        <dbReference type="ChEBI" id="CHEBI:57743"/>
    </ligand>
</feature>
<feature type="binding site" evidence="1">
    <location>
        <position position="175"/>
    </location>
    <ligand>
        <name>L-citrulline</name>
        <dbReference type="ChEBI" id="CHEBI:57743"/>
    </ligand>
</feature>
<feature type="binding site" evidence="1">
    <location>
        <position position="260"/>
    </location>
    <ligand>
        <name>L-citrulline</name>
        <dbReference type="ChEBI" id="CHEBI:57743"/>
    </ligand>
</feature>
<feature type="binding site" evidence="1">
    <location>
        <position position="272"/>
    </location>
    <ligand>
        <name>L-citrulline</name>
        <dbReference type="ChEBI" id="CHEBI:57743"/>
    </ligand>
</feature>
<name>ASSY_METTH</name>
<keyword id="KW-0028">Amino-acid biosynthesis</keyword>
<keyword id="KW-0055">Arginine biosynthesis</keyword>
<keyword id="KW-0067">ATP-binding</keyword>
<keyword id="KW-0963">Cytoplasm</keyword>
<keyword id="KW-0436">Ligase</keyword>
<keyword id="KW-0547">Nucleotide-binding</keyword>
<keyword id="KW-1185">Reference proteome</keyword>
<evidence type="ECO:0000255" key="1">
    <source>
        <dbReference type="HAMAP-Rule" id="MF_00005"/>
    </source>
</evidence>
<accession>O27322</accession>
<comment type="catalytic activity">
    <reaction evidence="1">
        <text>L-citrulline + L-aspartate + ATP = 2-(N(omega)-L-arginino)succinate + AMP + diphosphate + H(+)</text>
        <dbReference type="Rhea" id="RHEA:10932"/>
        <dbReference type="ChEBI" id="CHEBI:15378"/>
        <dbReference type="ChEBI" id="CHEBI:29991"/>
        <dbReference type="ChEBI" id="CHEBI:30616"/>
        <dbReference type="ChEBI" id="CHEBI:33019"/>
        <dbReference type="ChEBI" id="CHEBI:57472"/>
        <dbReference type="ChEBI" id="CHEBI:57743"/>
        <dbReference type="ChEBI" id="CHEBI:456215"/>
        <dbReference type="EC" id="6.3.4.5"/>
    </reaction>
</comment>
<comment type="pathway">
    <text evidence="1">Amino-acid biosynthesis; L-arginine biosynthesis; L-arginine from L-ornithine and carbamoyl phosphate: step 2/3.</text>
</comment>
<comment type="subunit">
    <text evidence="1">Homotetramer.</text>
</comment>
<comment type="subcellular location">
    <subcellularLocation>
        <location evidence="1">Cytoplasm</location>
    </subcellularLocation>
</comment>
<comment type="similarity">
    <text evidence="1">Belongs to the argininosuccinate synthase family. Type 1 subfamily.</text>
</comment>
<gene>
    <name evidence="1" type="primary">argG</name>
    <name type="ordered locus">MTH_1254</name>
</gene>
<reference key="1">
    <citation type="journal article" date="1997" name="J. Bacteriol.">
        <title>Complete genome sequence of Methanobacterium thermoautotrophicum deltaH: functional analysis and comparative genomics.</title>
        <authorList>
            <person name="Smith D.R."/>
            <person name="Doucette-Stamm L.A."/>
            <person name="Deloughery C."/>
            <person name="Lee H.-M."/>
            <person name="Dubois J."/>
            <person name="Aldredge T."/>
            <person name="Bashirzadeh R."/>
            <person name="Blakely D."/>
            <person name="Cook R."/>
            <person name="Gilbert K."/>
            <person name="Harrison D."/>
            <person name="Hoang L."/>
            <person name="Keagle P."/>
            <person name="Lumm W."/>
            <person name="Pothier B."/>
            <person name="Qiu D."/>
            <person name="Spadafora R."/>
            <person name="Vicare R."/>
            <person name="Wang Y."/>
            <person name="Wierzbowski J."/>
            <person name="Gibson R."/>
            <person name="Jiwani N."/>
            <person name="Caruso A."/>
            <person name="Bush D."/>
            <person name="Safer H."/>
            <person name="Patwell D."/>
            <person name="Prabhakar S."/>
            <person name="McDougall S."/>
            <person name="Shimer G."/>
            <person name="Goyal A."/>
            <person name="Pietrovski S."/>
            <person name="Church G.M."/>
            <person name="Daniels C.J."/>
            <person name="Mao J.-I."/>
            <person name="Rice P."/>
            <person name="Noelling J."/>
            <person name="Reeve J.N."/>
        </authorList>
    </citation>
    <scope>NUCLEOTIDE SEQUENCE [LARGE SCALE GENOMIC DNA]</scope>
    <source>
        <strain>ATCC 29096 / DSM 1053 / JCM 10044 / NBRC 100330 / Delta H</strain>
    </source>
</reference>
<proteinExistence type="inferred from homology"/>
<sequence length="399" mass="44760">MKVIAVDKVVLAFSGGLDTSVCIKLLEEKYNMEVITACVDVGQPRDEIERPAMVAKELGNYRHYTVDARREFAEDYIFPAIKANAVYEGYPLSTALARPLIAKKIVEVAEKEGASAIAHGCTGKGNDQFRFEAVIRSTTDLDVIAPIRDLNLTRTEEMEYARSCGIPLPSDKLYSIDENLWGRAIEGDILEDPMVEPPEDAFEWTKPIHETPEDPEVIEIGFHGGVPVALNGEELEPVELIGLANEVAGKHGIGRVDIMEDRIIGMKSREIYETPAAFLLLEAHRGLEQLTLTRSELRFADIISSTYAELVYSGLWHDPLREDLDMAVNHMQRRVTGTVRVKLHRGSMRVIGRESPYSLYSEEIVSFEDKTLDQREMAGMVKNYALQAAIYSRVCRKEN</sequence>